<reference key="1">
    <citation type="submission" date="2000-12" db="EMBL/GenBank/DDBJ databases">
        <title>Identification of whole cDNA of sheep preproendothelin-1.</title>
        <authorList>
            <person name="Chen D."/>
            <person name="Meyrick B.O."/>
        </authorList>
    </citation>
    <scope>NUCLEOTIDE SEQUENCE [MRNA]</scope>
    <source>
        <tissue>Smooth muscle</tissue>
    </source>
</reference>
<name>EDN1_SHEEP</name>
<dbReference type="EMBL" id="AF329468">
    <property type="protein sequence ID" value="AAG49531.1"/>
    <property type="molecule type" value="mRNA"/>
</dbReference>
<dbReference type="RefSeq" id="NP_001009810.1">
    <property type="nucleotide sequence ID" value="NM_001009810.1"/>
</dbReference>
<dbReference type="STRING" id="9940.ENSOARP00000015104"/>
<dbReference type="PaxDb" id="9940-ENSOARP00000015104"/>
<dbReference type="GeneID" id="443498"/>
<dbReference type="KEGG" id="oas:443498"/>
<dbReference type="CTD" id="1906"/>
<dbReference type="eggNOG" id="ENOG502S1NV">
    <property type="taxonomic scope" value="Eukaryota"/>
</dbReference>
<dbReference type="OrthoDB" id="8873756at2759"/>
<dbReference type="Proteomes" id="UP000002356">
    <property type="component" value="Unplaced"/>
</dbReference>
<dbReference type="GO" id="GO:0005615">
    <property type="term" value="C:extracellular space"/>
    <property type="evidence" value="ECO:0007669"/>
    <property type="project" value="TreeGrafter"/>
</dbReference>
<dbReference type="GO" id="GO:0031707">
    <property type="term" value="F:endothelin A receptor binding"/>
    <property type="evidence" value="ECO:0007669"/>
    <property type="project" value="TreeGrafter"/>
</dbReference>
<dbReference type="GO" id="GO:0031708">
    <property type="term" value="F:endothelin B receptor binding"/>
    <property type="evidence" value="ECO:0007669"/>
    <property type="project" value="TreeGrafter"/>
</dbReference>
<dbReference type="GO" id="GO:0005179">
    <property type="term" value="F:hormone activity"/>
    <property type="evidence" value="ECO:0007669"/>
    <property type="project" value="TreeGrafter"/>
</dbReference>
<dbReference type="GO" id="GO:0086100">
    <property type="term" value="P:endothelin receptor signaling pathway"/>
    <property type="evidence" value="ECO:0000250"/>
    <property type="project" value="UniProtKB"/>
</dbReference>
<dbReference type="GO" id="GO:0006874">
    <property type="term" value="P:intracellular calcium ion homeostasis"/>
    <property type="evidence" value="ECO:0007669"/>
    <property type="project" value="TreeGrafter"/>
</dbReference>
<dbReference type="GO" id="GO:1900182">
    <property type="term" value="P:positive regulation of protein localization to nucleus"/>
    <property type="evidence" value="ECO:0000250"/>
    <property type="project" value="UniProtKB"/>
</dbReference>
<dbReference type="GO" id="GO:0003100">
    <property type="term" value="P:regulation of systemic arterial blood pressure by endothelin"/>
    <property type="evidence" value="ECO:0007669"/>
    <property type="project" value="TreeGrafter"/>
</dbReference>
<dbReference type="GO" id="GO:0019229">
    <property type="term" value="P:regulation of vasoconstriction"/>
    <property type="evidence" value="ECO:0007669"/>
    <property type="project" value="InterPro"/>
</dbReference>
<dbReference type="GO" id="GO:0014826">
    <property type="term" value="P:vein smooth muscle contraction"/>
    <property type="evidence" value="ECO:0007669"/>
    <property type="project" value="TreeGrafter"/>
</dbReference>
<dbReference type="InterPro" id="IPR020475">
    <property type="entry name" value="Endothelin"/>
</dbReference>
<dbReference type="InterPro" id="IPR019764">
    <property type="entry name" value="Endothelin_toxin_CS"/>
</dbReference>
<dbReference type="InterPro" id="IPR001928">
    <property type="entry name" value="Endothln-like_toxin"/>
</dbReference>
<dbReference type="PANTHER" id="PTHR13874">
    <property type="entry name" value="ENDOTHELIN"/>
    <property type="match status" value="1"/>
</dbReference>
<dbReference type="PANTHER" id="PTHR13874:SF10">
    <property type="entry name" value="ENDOTHELIN-1"/>
    <property type="match status" value="1"/>
</dbReference>
<dbReference type="Pfam" id="PF00322">
    <property type="entry name" value="Endothelin"/>
    <property type="match status" value="1"/>
</dbReference>
<dbReference type="PRINTS" id="PR00365">
    <property type="entry name" value="ENDOTHELIN"/>
</dbReference>
<dbReference type="SMART" id="SM00272">
    <property type="entry name" value="END"/>
    <property type="match status" value="2"/>
</dbReference>
<dbReference type="PROSITE" id="PS00270">
    <property type="entry name" value="ENDOTHELIN"/>
    <property type="match status" value="2"/>
</dbReference>
<feature type="signal peptide" evidence="5">
    <location>
        <begin position="1"/>
        <end position="25"/>
    </location>
</feature>
<feature type="propeptide" id="PRO_0000008075" evidence="4">
    <location>
        <begin position="26"/>
        <end position="50"/>
    </location>
</feature>
<feature type="peptide" id="PRO_0000436400" description="Big endothelin-1" evidence="4">
    <location>
        <begin position="53"/>
        <end position="91"/>
    </location>
</feature>
<feature type="peptide" id="PRO_0000008076" description="Endothelin-1">
    <location>
        <begin position="53"/>
        <end position="73"/>
    </location>
</feature>
<feature type="propeptide" id="PRO_0000008077">
    <location>
        <begin position="74"/>
        <end position="202"/>
    </location>
</feature>
<feature type="region of interest" description="Disordered" evidence="6">
    <location>
        <begin position="29"/>
        <end position="48"/>
    </location>
</feature>
<feature type="region of interest" description="Endothelin-like">
    <location>
        <begin position="110"/>
        <end position="124"/>
    </location>
</feature>
<feature type="site" description="Cleavage; by KEL" evidence="1">
    <location>
        <begin position="73"/>
        <end position="74"/>
    </location>
</feature>
<feature type="disulfide bond" evidence="1">
    <location>
        <begin position="53"/>
        <end position="67"/>
    </location>
</feature>
<feature type="disulfide bond" evidence="1">
    <location>
        <begin position="55"/>
        <end position="63"/>
    </location>
</feature>
<organism>
    <name type="scientific">Ovis aries</name>
    <name type="common">Sheep</name>
    <dbReference type="NCBI Taxonomy" id="9940"/>
    <lineage>
        <taxon>Eukaryota</taxon>
        <taxon>Metazoa</taxon>
        <taxon>Chordata</taxon>
        <taxon>Craniata</taxon>
        <taxon>Vertebrata</taxon>
        <taxon>Euteleostomi</taxon>
        <taxon>Mammalia</taxon>
        <taxon>Eutheria</taxon>
        <taxon>Laurasiatheria</taxon>
        <taxon>Artiodactyla</taxon>
        <taxon>Ruminantia</taxon>
        <taxon>Pecora</taxon>
        <taxon>Bovidae</taxon>
        <taxon>Caprinae</taxon>
        <taxon>Ovis</taxon>
    </lineage>
</organism>
<protein>
    <recommendedName>
        <fullName>Endothelin-1</fullName>
        <shortName>ET-1</shortName>
    </recommendedName>
    <alternativeName>
        <fullName>Preproendothelin-1</fullName>
        <shortName>PPET1</shortName>
    </alternativeName>
    <component>
        <recommendedName>
            <fullName>Big endothelin-1</fullName>
        </recommendedName>
    </component>
</protein>
<comment type="function">
    <text evidence="1 2 3">Endothelins are endothelium-derived vasoconstrictor peptides (By similarity). Probable ligand for G-protein coupled receptors EDNRA and EDNRB which activates PTK2B, BCAR1, BCAR3 and, GTPases RAP1 and RHOA cascade in glomerular mesangial cells (By similarity). Also binds the DEAR/FBXW7-AS1 receptor (By similarity). Promotes mesenteric arterial wall remodeling via activation of ROCK signaling and subsequent colocalization of NFATC3 with F-actin filaments (By similarity). NFATC3 then translocates to the nucleus where it subsequently promotes the transcription of the smooth muscle hypertrophy and differentiation marker ACTA2 (By similarity).</text>
</comment>
<comment type="subcellular location">
    <subcellularLocation>
        <location>Secreted</location>
    </subcellularLocation>
</comment>
<comment type="similarity">
    <text evidence="7">Belongs to the endothelin/sarafotoxin family.</text>
</comment>
<gene>
    <name type="primary">EDN1</name>
</gene>
<accession>Q9BG76</accession>
<keyword id="KW-0165">Cleavage on pair of basic residues</keyword>
<keyword id="KW-1015">Disulfide bond</keyword>
<keyword id="KW-1185">Reference proteome</keyword>
<keyword id="KW-0964">Secreted</keyword>
<keyword id="KW-0732">Signal</keyword>
<keyword id="KW-0838">Vasoactive</keyword>
<keyword id="KW-0839">Vasoconstrictor</keyword>
<sequence>MDYFPMIFALLFVAFQGAPEAAVLGTELSTGAESGGERPVPTTPWRPRRSKRCSCSSLMDKECVYFCHLDIIWVNTPEHVVPYGLGSPSRSKRSLKDFFPTKATVHRKRCQCASQTDKKCQNFCQAGKELKDQDSMEKAWDNRKRGKDCPKLGEKCLQQQLVVGRKTRRLETISNSIKTSFRVAKLKAQLYRDKKVIYSRAH</sequence>
<evidence type="ECO:0000250" key="1">
    <source>
        <dbReference type="UniProtKB" id="P05305"/>
    </source>
</evidence>
<evidence type="ECO:0000250" key="2">
    <source>
        <dbReference type="UniProtKB" id="P09558"/>
    </source>
</evidence>
<evidence type="ECO:0000250" key="3">
    <source>
        <dbReference type="UniProtKB" id="P22387"/>
    </source>
</evidence>
<evidence type="ECO:0000250" key="4">
    <source>
        <dbReference type="UniProtKB" id="P22388"/>
    </source>
</evidence>
<evidence type="ECO:0000255" key="5"/>
<evidence type="ECO:0000256" key="6">
    <source>
        <dbReference type="SAM" id="MobiDB-lite"/>
    </source>
</evidence>
<evidence type="ECO:0000305" key="7"/>
<proteinExistence type="evidence at transcript level"/>